<reference key="1">
    <citation type="submission" date="2006-08" db="EMBL/GenBank/DDBJ databases">
        <title>Complete sequence of chromosome 1 of Shewanella sp. MR-7.</title>
        <authorList>
            <person name="Copeland A."/>
            <person name="Lucas S."/>
            <person name="Lapidus A."/>
            <person name="Barry K."/>
            <person name="Detter J.C."/>
            <person name="Glavina del Rio T."/>
            <person name="Hammon N."/>
            <person name="Israni S."/>
            <person name="Dalin E."/>
            <person name="Tice H."/>
            <person name="Pitluck S."/>
            <person name="Kiss H."/>
            <person name="Brettin T."/>
            <person name="Bruce D."/>
            <person name="Han C."/>
            <person name="Tapia R."/>
            <person name="Gilna P."/>
            <person name="Schmutz J."/>
            <person name="Larimer F."/>
            <person name="Land M."/>
            <person name="Hauser L."/>
            <person name="Kyrpides N."/>
            <person name="Mikhailova N."/>
            <person name="Nealson K."/>
            <person name="Konstantinidis K."/>
            <person name="Klappenbach J."/>
            <person name="Tiedje J."/>
            <person name="Richardson P."/>
        </authorList>
    </citation>
    <scope>NUCLEOTIDE SEQUENCE [LARGE SCALE GENOMIC DNA]</scope>
    <source>
        <strain>MR-7</strain>
    </source>
</reference>
<gene>
    <name evidence="1" type="primary">ydiU</name>
    <name evidence="1" type="synonym">selO</name>
    <name type="ordered locus">Shewmr7_0299</name>
</gene>
<comment type="function">
    <text evidence="1">Nucleotidyltransferase involved in the post-translational modification of proteins. It can catalyze the addition of adenosine monophosphate (AMP) or uridine monophosphate (UMP) to a protein, resulting in modifications known as AMPylation and UMPylation.</text>
</comment>
<comment type="catalytic activity">
    <reaction evidence="1">
        <text>L-seryl-[protein] + ATP = 3-O-(5'-adenylyl)-L-seryl-[protein] + diphosphate</text>
        <dbReference type="Rhea" id="RHEA:58120"/>
        <dbReference type="Rhea" id="RHEA-COMP:9863"/>
        <dbReference type="Rhea" id="RHEA-COMP:15073"/>
        <dbReference type="ChEBI" id="CHEBI:29999"/>
        <dbReference type="ChEBI" id="CHEBI:30616"/>
        <dbReference type="ChEBI" id="CHEBI:33019"/>
        <dbReference type="ChEBI" id="CHEBI:142516"/>
        <dbReference type="EC" id="2.7.7.108"/>
    </reaction>
</comment>
<comment type="catalytic activity">
    <reaction evidence="1">
        <text>L-threonyl-[protein] + ATP = 3-O-(5'-adenylyl)-L-threonyl-[protein] + diphosphate</text>
        <dbReference type="Rhea" id="RHEA:54292"/>
        <dbReference type="Rhea" id="RHEA-COMP:11060"/>
        <dbReference type="Rhea" id="RHEA-COMP:13847"/>
        <dbReference type="ChEBI" id="CHEBI:30013"/>
        <dbReference type="ChEBI" id="CHEBI:30616"/>
        <dbReference type="ChEBI" id="CHEBI:33019"/>
        <dbReference type="ChEBI" id="CHEBI:138113"/>
        <dbReference type="EC" id="2.7.7.108"/>
    </reaction>
</comment>
<comment type="catalytic activity">
    <reaction evidence="1">
        <text>L-tyrosyl-[protein] + ATP = O-(5'-adenylyl)-L-tyrosyl-[protein] + diphosphate</text>
        <dbReference type="Rhea" id="RHEA:54288"/>
        <dbReference type="Rhea" id="RHEA-COMP:10136"/>
        <dbReference type="Rhea" id="RHEA-COMP:13846"/>
        <dbReference type="ChEBI" id="CHEBI:30616"/>
        <dbReference type="ChEBI" id="CHEBI:33019"/>
        <dbReference type="ChEBI" id="CHEBI:46858"/>
        <dbReference type="ChEBI" id="CHEBI:83624"/>
        <dbReference type="EC" id="2.7.7.108"/>
    </reaction>
</comment>
<comment type="catalytic activity">
    <reaction evidence="1">
        <text>L-histidyl-[protein] + UTP = N(tele)-(5'-uridylyl)-L-histidyl-[protein] + diphosphate</text>
        <dbReference type="Rhea" id="RHEA:83891"/>
        <dbReference type="Rhea" id="RHEA-COMP:9745"/>
        <dbReference type="Rhea" id="RHEA-COMP:20239"/>
        <dbReference type="ChEBI" id="CHEBI:29979"/>
        <dbReference type="ChEBI" id="CHEBI:33019"/>
        <dbReference type="ChEBI" id="CHEBI:46398"/>
        <dbReference type="ChEBI" id="CHEBI:233474"/>
    </reaction>
</comment>
<comment type="catalytic activity">
    <reaction evidence="1">
        <text>L-seryl-[protein] + UTP = O-(5'-uridylyl)-L-seryl-[protein] + diphosphate</text>
        <dbReference type="Rhea" id="RHEA:64604"/>
        <dbReference type="Rhea" id="RHEA-COMP:9863"/>
        <dbReference type="Rhea" id="RHEA-COMP:16635"/>
        <dbReference type="ChEBI" id="CHEBI:29999"/>
        <dbReference type="ChEBI" id="CHEBI:33019"/>
        <dbReference type="ChEBI" id="CHEBI:46398"/>
        <dbReference type="ChEBI" id="CHEBI:156051"/>
    </reaction>
</comment>
<comment type="catalytic activity">
    <reaction evidence="1">
        <text>L-tyrosyl-[protein] + UTP = O-(5'-uridylyl)-L-tyrosyl-[protein] + diphosphate</text>
        <dbReference type="Rhea" id="RHEA:83887"/>
        <dbReference type="Rhea" id="RHEA-COMP:10136"/>
        <dbReference type="Rhea" id="RHEA-COMP:20238"/>
        <dbReference type="ChEBI" id="CHEBI:33019"/>
        <dbReference type="ChEBI" id="CHEBI:46398"/>
        <dbReference type="ChEBI" id="CHEBI:46858"/>
        <dbReference type="ChEBI" id="CHEBI:90602"/>
    </reaction>
</comment>
<comment type="cofactor">
    <cofactor evidence="1">
        <name>Mg(2+)</name>
        <dbReference type="ChEBI" id="CHEBI:18420"/>
    </cofactor>
    <cofactor evidence="1">
        <name>Mn(2+)</name>
        <dbReference type="ChEBI" id="CHEBI:29035"/>
    </cofactor>
</comment>
<comment type="similarity">
    <text evidence="1">Belongs to the SELO family.</text>
</comment>
<feature type="chain" id="PRO_0000271868" description="Protein nucleotidyltransferase YdiU">
    <location>
        <begin position="1"/>
        <end position="484"/>
    </location>
</feature>
<feature type="active site" description="Proton acceptor" evidence="1">
    <location>
        <position position="244"/>
    </location>
</feature>
<feature type="binding site" evidence="1">
    <location>
        <position position="81"/>
    </location>
    <ligand>
        <name>ATP</name>
        <dbReference type="ChEBI" id="CHEBI:30616"/>
    </ligand>
</feature>
<feature type="binding site" evidence="1">
    <location>
        <position position="83"/>
    </location>
    <ligand>
        <name>ATP</name>
        <dbReference type="ChEBI" id="CHEBI:30616"/>
    </ligand>
</feature>
<feature type="binding site" evidence="1">
    <location>
        <position position="84"/>
    </location>
    <ligand>
        <name>ATP</name>
        <dbReference type="ChEBI" id="CHEBI:30616"/>
    </ligand>
</feature>
<feature type="binding site" evidence="1">
    <location>
        <position position="103"/>
    </location>
    <ligand>
        <name>ATP</name>
        <dbReference type="ChEBI" id="CHEBI:30616"/>
    </ligand>
</feature>
<feature type="binding site" evidence="1">
    <location>
        <position position="115"/>
    </location>
    <ligand>
        <name>ATP</name>
        <dbReference type="ChEBI" id="CHEBI:30616"/>
    </ligand>
</feature>
<feature type="binding site" evidence="1">
    <location>
        <position position="116"/>
    </location>
    <ligand>
        <name>ATP</name>
        <dbReference type="ChEBI" id="CHEBI:30616"/>
    </ligand>
</feature>
<feature type="binding site" evidence="1">
    <location>
        <position position="166"/>
    </location>
    <ligand>
        <name>ATP</name>
        <dbReference type="ChEBI" id="CHEBI:30616"/>
    </ligand>
</feature>
<feature type="binding site" evidence="1">
    <location>
        <position position="173"/>
    </location>
    <ligand>
        <name>ATP</name>
        <dbReference type="ChEBI" id="CHEBI:30616"/>
    </ligand>
</feature>
<feature type="binding site" evidence="1">
    <location>
        <position position="245"/>
    </location>
    <ligand>
        <name>Mg(2+)</name>
        <dbReference type="ChEBI" id="CHEBI:18420"/>
    </ligand>
</feature>
<feature type="binding site" evidence="1">
    <location>
        <position position="254"/>
    </location>
    <ligand>
        <name>ATP</name>
        <dbReference type="ChEBI" id="CHEBI:30616"/>
    </ligand>
</feature>
<feature type="binding site" evidence="1">
    <location>
        <position position="254"/>
    </location>
    <ligand>
        <name>Mg(2+)</name>
        <dbReference type="ChEBI" id="CHEBI:18420"/>
    </ligand>
</feature>
<organism>
    <name type="scientific">Shewanella sp. (strain MR-7)</name>
    <dbReference type="NCBI Taxonomy" id="60481"/>
    <lineage>
        <taxon>Bacteria</taxon>
        <taxon>Pseudomonadati</taxon>
        <taxon>Pseudomonadota</taxon>
        <taxon>Gammaproteobacteria</taxon>
        <taxon>Alteromonadales</taxon>
        <taxon>Shewanellaceae</taxon>
        <taxon>Shewanella</taxon>
    </lineage>
</organism>
<evidence type="ECO:0000255" key="1">
    <source>
        <dbReference type="HAMAP-Rule" id="MF_00692"/>
    </source>
</evidence>
<sequence>MKFKQDFFTQLPEFYAQVYPQGISNPHWLAWSEDVAKLIDLQQPTDALLQGLSGNAAVEGASYYAQVYSGHQFGGYTPRLGDGRSIILGEALGPQGAWDVALKGGGPTPYSRHGDGRAVMRSAVREFLVSEALHHLGVPTTRALAVIGSDMPVWRESQETAAITVRLARSHIRFGHFEFFCHSERGQADKLTQLLNFTLKQHYPHLSCDLAGYKAWFLQVVQDTAKLIAHWQAIGFAHGVMNTDNMSILGDSFDFGPFAFLDTFQEDFICNHSDPEGRYAFGQQPGIGLWNLQRLAQALTPVIPSDDLIAALNQYQHALVQHYLMLMRAKLGLAERADSTAEQDQQDLELIGRFTVLMEKNQLDYSNTWRRFGQLDPSSAHSSLRDDFIDLNEFDAWYQAYQTRLGKVTDIEAWQQARNSVNPKYILRNYLAQEAIIAVEEGNLAPLERLHQVLRQPFAEQVEHEDLAKRPPDWGQGLIMSCSS</sequence>
<accession>Q0I001</accession>
<name>SELO_SHESR</name>
<keyword id="KW-0067">ATP-binding</keyword>
<keyword id="KW-0460">Magnesium</keyword>
<keyword id="KW-0464">Manganese</keyword>
<keyword id="KW-0479">Metal-binding</keyword>
<keyword id="KW-0547">Nucleotide-binding</keyword>
<keyword id="KW-0548">Nucleotidyltransferase</keyword>
<keyword id="KW-0808">Transferase</keyword>
<protein>
    <recommendedName>
        <fullName evidence="1">Protein nucleotidyltransferase YdiU</fullName>
        <ecNumber evidence="1">2.7.7.-</ecNumber>
    </recommendedName>
    <alternativeName>
        <fullName evidence="1">Protein adenylyltransferase YdiU</fullName>
        <ecNumber evidence="1">2.7.7.108</ecNumber>
    </alternativeName>
    <alternativeName>
        <fullName evidence="1">Protein uridylyltransferase YdiU</fullName>
        <ecNumber evidence="1">2.7.7.-</ecNumber>
    </alternativeName>
</protein>
<proteinExistence type="inferred from homology"/>
<dbReference type="EC" id="2.7.7.-" evidence="1"/>
<dbReference type="EC" id="2.7.7.108" evidence="1"/>
<dbReference type="EMBL" id="CP000444">
    <property type="protein sequence ID" value="ABI41304.1"/>
    <property type="molecule type" value="Genomic_DNA"/>
</dbReference>
<dbReference type="SMR" id="Q0I001"/>
<dbReference type="KEGG" id="shm:Shewmr7_0299"/>
<dbReference type="HOGENOM" id="CLU_010245_4_1_6"/>
<dbReference type="GO" id="GO:0070733">
    <property type="term" value="F:AMPylase activity"/>
    <property type="evidence" value="ECO:0007669"/>
    <property type="project" value="RHEA"/>
</dbReference>
<dbReference type="GO" id="GO:0005524">
    <property type="term" value="F:ATP binding"/>
    <property type="evidence" value="ECO:0007669"/>
    <property type="project" value="UniProtKB-UniRule"/>
</dbReference>
<dbReference type="GO" id="GO:0000287">
    <property type="term" value="F:magnesium ion binding"/>
    <property type="evidence" value="ECO:0007669"/>
    <property type="project" value="UniProtKB-UniRule"/>
</dbReference>
<dbReference type="HAMAP" id="MF_00692">
    <property type="entry name" value="YdiU_SelO"/>
    <property type="match status" value="1"/>
</dbReference>
<dbReference type="InterPro" id="IPR003846">
    <property type="entry name" value="SelO"/>
</dbReference>
<dbReference type="NCBIfam" id="NF000658">
    <property type="entry name" value="PRK00029.1"/>
    <property type="match status" value="1"/>
</dbReference>
<dbReference type="PANTHER" id="PTHR32057">
    <property type="entry name" value="PROTEIN ADENYLYLTRANSFERASE SELO, MITOCHONDRIAL"/>
    <property type="match status" value="1"/>
</dbReference>
<dbReference type="PANTHER" id="PTHR32057:SF14">
    <property type="entry name" value="PROTEIN ADENYLYLTRANSFERASE SELO, MITOCHONDRIAL"/>
    <property type="match status" value="1"/>
</dbReference>
<dbReference type="Pfam" id="PF02696">
    <property type="entry name" value="SelO"/>
    <property type="match status" value="1"/>
</dbReference>